<proteinExistence type="inferred from homology"/>
<feature type="chain" id="PRO_0000123740" description="Tritrans,polycis-undecaprenyl-diphosphate synthase (geranylgeranyl-diphosphate specific)">
    <location>
        <begin position="1"/>
        <end position="264"/>
    </location>
</feature>
<feature type="active site" evidence="1">
    <location>
        <position position="43"/>
    </location>
</feature>
<feature type="active site" description="Proton acceptor" evidence="1">
    <location>
        <position position="91"/>
    </location>
</feature>
<feature type="binding site" evidence="1">
    <location>
        <position position="43"/>
    </location>
    <ligand>
        <name>Mg(2+)</name>
        <dbReference type="ChEBI" id="CHEBI:18420"/>
    </ligand>
</feature>
<feature type="binding site" evidence="1">
    <location>
        <begin position="44"/>
        <end position="47"/>
    </location>
    <ligand>
        <name>substrate</name>
    </ligand>
</feature>
<feature type="binding site" evidence="1">
    <location>
        <position position="48"/>
    </location>
    <ligand>
        <name>substrate</name>
    </ligand>
</feature>
<feature type="binding site" evidence="1">
    <location>
        <position position="60"/>
    </location>
    <ligand>
        <name>substrate</name>
    </ligand>
</feature>
<feature type="binding site" evidence="1">
    <location>
        <begin position="88"/>
        <end position="90"/>
    </location>
    <ligand>
        <name>substrate</name>
    </ligand>
</feature>
<feature type="binding site" evidence="1">
    <location>
        <position position="92"/>
    </location>
    <ligand>
        <name>substrate</name>
    </ligand>
</feature>
<feature type="binding site" evidence="1">
    <location>
        <position position="94"/>
    </location>
    <ligand>
        <name>substrate</name>
    </ligand>
</feature>
<feature type="binding site" evidence="1">
    <location>
        <position position="213"/>
    </location>
    <ligand>
        <name>substrate</name>
    </ligand>
</feature>
<feature type="binding site" evidence="1">
    <location>
        <begin position="219"/>
        <end position="221"/>
    </location>
    <ligand>
        <name>substrate</name>
    </ligand>
</feature>
<feature type="binding site" evidence="1">
    <location>
        <position position="232"/>
    </location>
    <ligand>
        <name>Mg(2+)</name>
        <dbReference type="ChEBI" id="CHEBI:18420"/>
    </ligand>
</feature>
<protein>
    <recommendedName>
        <fullName evidence="1">Tritrans,polycis-undecaprenyl-diphosphate synthase (geranylgeranyl-diphosphate specific)</fullName>
        <ecNumber evidence="1">2.5.1.89</ecNumber>
    </recommendedName>
    <alternativeName>
        <fullName evidence="1">Undecaprenyl diphosphate synthase</fullName>
        <shortName evidence="1">UDS</shortName>
    </alternativeName>
    <alternativeName>
        <fullName evidence="1">Undecaprenyl pyrophosphate synthase</fullName>
        <shortName evidence="1">UPP synthase</shortName>
    </alternativeName>
</protein>
<dbReference type="EC" id="2.5.1.89" evidence="1"/>
<dbReference type="EMBL" id="AP006878">
    <property type="protein sequence ID" value="BAD85362.1"/>
    <property type="molecule type" value="Genomic_DNA"/>
</dbReference>
<dbReference type="RefSeq" id="WP_011250124.1">
    <property type="nucleotide sequence ID" value="NC_006624.1"/>
</dbReference>
<dbReference type="SMR" id="Q5JGE1"/>
<dbReference type="FunCoup" id="Q5JGE1">
    <property type="interactions" value="165"/>
</dbReference>
<dbReference type="STRING" id="69014.TK1173"/>
<dbReference type="EnsemblBacteria" id="BAD85362">
    <property type="protein sequence ID" value="BAD85362"/>
    <property type="gene ID" value="TK1173"/>
</dbReference>
<dbReference type="GeneID" id="78447688"/>
<dbReference type="KEGG" id="tko:TK1173"/>
<dbReference type="PATRIC" id="fig|69014.16.peg.1148"/>
<dbReference type="eggNOG" id="arCOG01532">
    <property type="taxonomic scope" value="Archaea"/>
</dbReference>
<dbReference type="HOGENOM" id="CLU_038505_2_0_2"/>
<dbReference type="InParanoid" id="Q5JGE1"/>
<dbReference type="OrthoDB" id="8293at2157"/>
<dbReference type="PhylomeDB" id="Q5JGE1"/>
<dbReference type="Proteomes" id="UP000000536">
    <property type="component" value="Chromosome"/>
</dbReference>
<dbReference type="GO" id="GO:0000287">
    <property type="term" value="F:magnesium ion binding"/>
    <property type="evidence" value="ECO:0007669"/>
    <property type="project" value="UniProtKB-UniRule"/>
</dbReference>
<dbReference type="GO" id="GO:0004659">
    <property type="term" value="F:prenyltransferase activity"/>
    <property type="evidence" value="ECO:0007669"/>
    <property type="project" value="UniProtKB-UniRule"/>
</dbReference>
<dbReference type="GO" id="GO:0016094">
    <property type="term" value="P:polyprenol biosynthetic process"/>
    <property type="evidence" value="ECO:0000318"/>
    <property type="project" value="GO_Central"/>
</dbReference>
<dbReference type="CDD" id="cd00475">
    <property type="entry name" value="Cis_IPPS"/>
    <property type="match status" value="1"/>
</dbReference>
<dbReference type="FunFam" id="3.40.1180.10:FF:000003">
    <property type="entry name" value="Isoprenyl transferase 2"/>
    <property type="match status" value="1"/>
</dbReference>
<dbReference type="Gene3D" id="3.40.1180.10">
    <property type="entry name" value="Decaprenyl diphosphate synthase-like"/>
    <property type="match status" value="1"/>
</dbReference>
<dbReference type="HAMAP" id="MF_01139">
    <property type="entry name" value="ISPT"/>
    <property type="match status" value="1"/>
</dbReference>
<dbReference type="InterPro" id="IPR001441">
    <property type="entry name" value="UPP_synth-like"/>
</dbReference>
<dbReference type="InterPro" id="IPR018520">
    <property type="entry name" value="UPP_synth-like_CS"/>
</dbReference>
<dbReference type="InterPro" id="IPR036424">
    <property type="entry name" value="UPP_synth-like_sf"/>
</dbReference>
<dbReference type="NCBIfam" id="TIGR00055">
    <property type="entry name" value="uppS"/>
    <property type="match status" value="1"/>
</dbReference>
<dbReference type="PANTHER" id="PTHR10291:SF43">
    <property type="entry name" value="DEHYDRODOLICHYL DIPHOSPHATE SYNTHASE COMPLEX SUBUNIT DHDDS"/>
    <property type="match status" value="1"/>
</dbReference>
<dbReference type="PANTHER" id="PTHR10291">
    <property type="entry name" value="DEHYDRODOLICHYL DIPHOSPHATE SYNTHASE FAMILY MEMBER"/>
    <property type="match status" value="1"/>
</dbReference>
<dbReference type="Pfam" id="PF01255">
    <property type="entry name" value="Prenyltransf"/>
    <property type="match status" value="1"/>
</dbReference>
<dbReference type="SUPFAM" id="SSF64005">
    <property type="entry name" value="Undecaprenyl diphosphate synthase"/>
    <property type="match status" value="1"/>
</dbReference>
<dbReference type="PROSITE" id="PS01066">
    <property type="entry name" value="UPP_SYNTHASE"/>
    <property type="match status" value="1"/>
</dbReference>
<name>UPPS_THEKO</name>
<organism>
    <name type="scientific">Thermococcus kodakarensis (strain ATCC BAA-918 / JCM 12380 / KOD1)</name>
    <name type="common">Pyrococcus kodakaraensis (strain KOD1)</name>
    <dbReference type="NCBI Taxonomy" id="69014"/>
    <lineage>
        <taxon>Archaea</taxon>
        <taxon>Methanobacteriati</taxon>
        <taxon>Methanobacteriota</taxon>
        <taxon>Thermococci</taxon>
        <taxon>Thermococcales</taxon>
        <taxon>Thermococcaceae</taxon>
        <taxon>Thermococcus</taxon>
    </lineage>
</organism>
<evidence type="ECO:0000255" key="1">
    <source>
        <dbReference type="HAMAP-Rule" id="MF_01139"/>
    </source>
</evidence>
<gene>
    <name evidence="1" type="primary">uppS</name>
    <name type="ordered locus">TK1173</name>
</gene>
<sequence length="264" mass="31552">MLYRLVSHIPHILFKPVYDAYESYLLEKVKSGNIPKHVAIIMDGNRRWARKLEKPPWYGHLFGSKKLEEILEWCRELNIRTLTVYAFSTENFKRSKEEVEALMNLFEEKFKELVQDERVHRYGIRVNVLGRKDMLPENVRKAAEEAERATRKYSNYNLNIALAYGGRSEIADAVREIVRDVLEGKIKPEDIDEEAIKRYLYYPNMPDPDIVIRTGGEVRISNFLLYQIAYSELFFVDVYFPEFRKIDFLRIIREFQKRQRRFGR</sequence>
<reference key="1">
    <citation type="journal article" date="2005" name="Genome Res.">
        <title>Complete genome sequence of the hyperthermophilic archaeon Thermococcus kodakaraensis KOD1 and comparison with Pyrococcus genomes.</title>
        <authorList>
            <person name="Fukui T."/>
            <person name="Atomi H."/>
            <person name="Kanai T."/>
            <person name="Matsumi R."/>
            <person name="Fujiwara S."/>
            <person name="Imanaka T."/>
        </authorList>
    </citation>
    <scope>NUCLEOTIDE SEQUENCE [LARGE SCALE GENOMIC DNA]</scope>
    <source>
        <strain>ATCC BAA-918 / JCM 12380 / KOD1</strain>
    </source>
</reference>
<comment type="function">
    <text evidence="1">Catalyzes the sequential condensation of isopentenyl diphosphate (IPP) with geranylgeranyl diphosphate (GGPP) to yield (2Z,6Z,10Z,14Z,18Z,22Z,26Z,30E,34E,38E)-undecaprenyl diphosphate (tritrans,heptacis-UPP). It is probably the precursor of glycosyl carrier lipids.</text>
</comment>
<comment type="catalytic activity">
    <reaction evidence="1">
        <text>geranylgeranyl diphosphate + 7 isopentenyl diphosphate = tri-trans,hepta-cis-undecaprenyl diphosphate + 7 diphosphate</text>
        <dbReference type="Rhea" id="RHEA:27622"/>
        <dbReference type="ChEBI" id="CHEBI:33019"/>
        <dbReference type="ChEBI" id="CHEBI:57533"/>
        <dbReference type="ChEBI" id="CHEBI:60388"/>
        <dbReference type="ChEBI" id="CHEBI:128769"/>
        <dbReference type="EC" id="2.5.1.89"/>
    </reaction>
</comment>
<comment type="cofactor">
    <cofactor evidence="1">
        <name>Mg(2+)</name>
        <dbReference type="ChEBI" id="CHEBI:18420"/>
    </cofactor>
    <text evidence="1">Binds 2 magnesium ions per subunit.</text>
</comment>
<comment type="subunit">
    <text evidence="1">Homodimer.</text>
</comment>
<comment type="similarity">
    <text evidence="1">Belongs to the UPP synthase family.</text>
</comment>
<keyword id="KW-0460">Magnesium</keyword>
<keyword id="KW-0479">Metal-binding</keyword>
<keyword id="KW-1185">Reference proteome</keyword>
<keyword id="KW-0808">Transferase</keyword>
<accession>Q5JGE1</accession>